<evidence type="ECO:0000255" key="1">
    <source>
        <dbReference type="HAMAP-Rule" id="MF_00081"/>
    </source>
</evidence>
<feature type="chain" id="PRO_1000010380" description="Heat-inducible transcription repressor HrcA">
    <location>
        <begin position="1"/>
        <end position="362"/>
    </location>
</feature>
<name>HRCA_BRASB</name>
<proteinExistence type="inferred from homology"/>
<dbReference type="EMBL" id="CP000494">
    <property type="protein sequence ID" value="ABQ32484.1"/>
    <property type="molecule type" value="Genomic_DNA"/>
</dbReference>
<dbReference type="RefSeq" id="WP_011942704.1">
    <property type="nucleotide sequence ID" value="NC_009485.1"/>
</dbReference>
<dbReference type="SMR" id="A5E8J0"/>
<dbReference type="STRING" id="288000.BBta_0187"/>
<dbReference type="KEGG" id="bbt:BBta_0187"/>
<dbReference type="eggNOG" id="COG1420">
    <property type="taxonomic scope" value="Bacteria"/>
</dbReference>
<dbReference type="HOGENOM" id="CLU_050019_0_0_5"/>
<dbReference type="OrthoDB" id="9783139at2"/>
<dbReference type="Proteomes" id="UP000000246">
    <property type="component" value="Chromosome"/>
</dbReference>
<dbReference type="GO" id="GO:0003677">
    <property type="term" value="F:DNA binding"/>
    <property type="evidence" value="ECO:0007669"/>
    <property type="project" value="InterPro"/>
</dbReference>
<dbReference type="GO" id="GO:0045892">
    <property type="term" value="P:negative regulation of DNA-templated transcription"/>
    <property type="evidence" value="ECO:0007669"/>
    <property type="project" value="UniProtKB-UniRule"/>
</dbReference>
<dbReference type="Gene3D" id="3.30.450.40">
    <property type="match status" value="1"/>
</dbReference>
<dbReference type="Gene3D" id="3.30.390.60">
    <property type="entry name" value="Heat-inducible transcription repressor hrca homolog, domain 3"/>
    <property type="match status" value="1"/>
</dbReference>
<dbReference type="Gene3D" id="1.10.10.10">
    <property type="entry name" value="Winged helix-like DNA-binding domain superfamily/Winged helix DNA-binding domain"/>
    <property type="match status" value="1"/>
</dbReference>
<dbReference type="HAMAP" id="MF_00081">
    <property type="entry name" value="HrcA"/>
    <property type="match status" value="1"/>
</dbReference>
<dbReference type="InterPro" id="IPR029016">
    <property type="entry name" value="GAF-like_dom_sf"/>
</dbReference>
<dbReference type="InterPro" id="IPR002571">
    <property type="entry name" value="HrcA"/>
</dbReference>
<dbReference type="InterPro" id="IPR021153">
    <property type="entry name" value="HrcA_C"/>
</dbReference>
<dbReference type="InterPro" id="IPR036388">
    <property type="entry name" value="WH-like_DNA-bd_sf"/>
</dbReference>
<dbReference type="InterPro" id="IPR036390">
    <property type="entry name" value="WH_DNA-bd_sf"/>
</dbReference>
<dbReference type="InterPro" id="IPR023120">
    <property type="entry name" value="WHTH_transcript_rep_HrcA_IDD"/>
</dbReference>
<dbReference type="NCBIfam" id="TIGR00331">
    <property type="entry name" value="hrcA"/>
    <property type="match status" value="1"/>
</dbReference>
<dbReference type="PANTHER" id="PTHR34824">
    <property type="entry name" value="HEAT-INDUCIBLE TRANSCRIPTION REPRESSOR HRCA"/>
    <property type="match status" value="1"/>
</dbReference>
<dbReference type="PANTHER" id="PTHR34824:SF1">
    <property type="entry name" value="HEAT-INDUCIBLE TRANSCRIPTION REPRESSOR HRCA"/>
    <property type="match status" value="1"/>
</dbReference>
<dbReference type="Pfam" id="PF01628">
    <property type="entry name" value="HrcA"/>
    <property type="match status" value="1"/>
</dbReference>
<dbReference type="PIRSF" id="PIRSF005485">
    <property type="entry name" value="HrcA"/>
    <property type="match status" value="1"/>
</dbReference>
<dbReference type="SUPFAM" id="SSF55781">
    <property type="entry name" value="GAF domain-like"/>
    <property type="match status" value="1"/>
</dbReference>
<dbReference type="SUPFAM" id="SSF46785">
    <property type="entry name" value="Winged helix' DNA-binding domain"/>
    <property type="match status" value="1"/>
</dbReference>
<keyword id="KW-1185">Reference proteome</keyword>
<keyword id="KW-0678">Repressor</keyword>
<keyword id="KW-0346">Stress response</keyword>
<keyword id="KW-0804">Transcription</keyword>
<keyword id="KW-0805">Transcription regulation</keyword>
<gene>
    <name evidence="1" type="primary">hrcA</name>
    <name type="ordered locus">BBta_0187</name>
</gene>
<reference key="1">
    <citation type="journal article" date="2007" name="Science">
        <title>Legumes symbioses: absence of nod genes in photosynthetic bradyrhizobia.</title>
        <authorList>
            <person name="Giraud E."/>
            <person name="Moulin L."/>
            <person name="Vallenet D."/>
            <person name="Barbe V."/>
            <person name="Cytryn E."/>
            <person name="Avarre J.-C."/>
            <person name="Jaubert M."/>
            <person name="Simon D."/>
            <person name="Cartieaux F."/>
            <person name="Prin Y."/>
            <person name="Bena G."/>
            <person name="Hannibal L."/>
            <person name="Fardoux J."/>
            <person name="Kojadinovic M."/>
            <person name="Vuillet L."/>
            <person name="Lajus A."/>
            <person name="Cruveiller S."/>
            <person name="Rouy Z."/>
            <person name="Mangenot S."/>
            <person name="Segurens B."/>
            <person name="Dossat C."/>
            <person name="Franck W.L."/>
            <person name="Chang W.-S."/>
            <person name="Saunders E."/>
            <person name="Bruce D."/>
            <person name="Richardson P."/>
            <person name="Normand P."/>
            <person name="Dreyfus B."/>
            <person name="Pignol D."/>
            <person name="Stacey G."/>
            <person name="Emerich D."/>
            <person name="Vermeglio A."/>
            <person name="Medigue C."/>
            <person name="Sadowsky M."/>
        </authorList>
    </citation>
    <scope>NUCLEOTIDE SEQUENCE [LARGE SCALE GENOMIC DNA]</scope>
    <source>
        <strain>BTAi1 / ATCC BAA-1182</strain>
    </source>
</reference>
<protein>
    <recommendedName>
        <fullName evidence="1">Heat-inducible transcription repressor HrcA</fullName>
    </recommendedName>
</protein>
<organism>
    <name type="scientific">Bradyrhizobium sp. (strain BTAi1 / ATCC BAA-1182)</name>
    <dbReference type="NCBI Taxonomy" id="288000"/>
    <lineage>
        <taxon>Bacteria</taxon>
        <taxon>Pseudomonadati</taxon>
        <taxon>Pseudomonadota</taxon>
        <taxon>Alphaproteobacteria</taxon>
        <taxon>Hyphomicrobiales</taxon>
        <taxon>Nitrobacteraceae</taxon>
        <taxon>Bradyrhizobium</taxon>
    </lineage>
</organism>
<sequence>MAHHDPINLMTPPAGLAQLNERSREIFRQIVESYLATGEPVGSRNISRLIAVPLSPASVRNVMADLEQLGLIYAPHTSAGRLPTEAGLRFFVDALMQVGDMTEAERQSIQSQLASVGRAQSVEAALDEALTRLSGLTRAAAVVLTAKSNTRLKHIEFVRLEPERALVVLVGEDGQVENRVLALPPGVPSSALTEASNFLNARIRGRTLAEARLELETALAHDRAELDQLTQKVIAAGVASWSGGDSDDRQLIVRGHANLLEDLHALEDLERVRRLFDDLETKRGVVDLLGRAENADGVRIFIGSENKLFSLSGSSTIVSPYSDATGRIVGVLGVIGPTRLNYARVIPTVDYAARLVSRLLGG</sequence>
<comment type="function">
    <text evidence="1">Negative regulator of class I heat shock genes (grpE-dnaK-dnaJ and groELS operons). Prevents heat-shock induction of these operons.</text>
</comment>
<comment type="similarity">
    <text evidence="1">Belongs to the HrcA family.</text>
</comment>
<accession>A5E8J0</accession>